<keyword id="KW-0255">Endonuclease</keyword>
<keyword id="KW-0378">Hydrolase</keyword>
<keyword id="KW-0540">Nuclease</keyword>
<keyword id="KW-1185">Reference proteome</keyword>
<keyword id="KW-0694">RNA-binding</keyword>
<keyword id="KW-0819">tRNA processing</keyword>
<accession>A5GRN3</accession>
<protein>
    <recommendedName>
        <fullName evidence="1">Ribonuclease P protein component</fullName>
        <shortName evidence="1">RNase P protein</shortName>
        <shortName evidence="1">RNaseP protein</shortName>
        <ecNumber evidence="1">3.1.26.5</ecNumber>
    </recommendedName>
    <alternativeName>
        <fullName evidence="1">Protein C5</fullName>
    </alternativeName>
</protein>
<organism>
    <name type="scientific">Synechococcus sp. (strain RCC307)</name>
    <dbReference type="NCBI Taxonomy" id="316278"/>
    <lineage>
        <taxon>Bacteria</taxon>
        <taxon>Bacillati</taxon>
        <taxon>Cyanobacteriota</taxon>
        <taxon>Cyanophyceae</taxon>
        <taxon>Synechococcales</taxon>
        <taxon>Synechococcaceae</taxon>
        <taxon>Synechococcus</taxon>
    </lineage>
</organism>
<feature type="chain" id="PRO_1000021485" description="Ribonuclease P protein component">
    <location>
        <begin position="1"/>
        <end position="127"/>
    </location>
</feature>
<evidence type="ECO:0000255" key="1">
    <source>
        <dbReference type="HAMAP-Rule" id="MF_00227"/>
    </source>
</evidence>
<name>RNPA_SYNR3</name>
<proteinExistence type="inferred from homology"/>
<gene>
    <name evidence="1" type="primary">rnpA</name>
    <name type="ordered locus">SynRCC307_0639</name>
</gene>
<sequence>MVLPQRHRLRGRGVFDYIYQRGQRFQQGLLQLRVADAATNLLREPPETLEGELRFGVVISSKVSKRAVKRNRLRRLLHEAFLRQTFRSDLPPTWLLLNLRPGAVELSDDNLLEEWSTLIQRAGLTDS</sequence>
<reference key="1">
    <citation type="submission" date="2006-05" db="EMBL/GenBank/DDBJ databases">
        <authorList>
            <consortium name="Genoscope"/>
        </authorList>
    </citation>
    <scope>NUCLEOTIDE SEQUENCE [LARGE SCALE GENOMIC DNA]</scope>
    <source>
        <strain>RCC307</strain>
    </source>
</reference>
<comment type="function">
    <text evidence="1">RNaseP catalyzes the removal of the 5'-leader sequence from pre-tRNA to produce the mature 5'-terminus. It can also cleave other RNA substrates such as 4.5S RNA. The protein component plays an auxiliary but essential role in vivo by binding to the 5'-leader sequence and broadening the substrate specificity of the ribozyme.</text>
</comment>
<comment type="catalytic activity">
    <reaction evidence="1">
        <text>Endonucleolytic cleavage of RNA, removing 5'-extranucleotides from tRNA precursor.</text>
        <dbReference type="EC" id="3.1.26.5"/>
    </reaction>
</comment>
<comment type="subunit">
    <text evidence="1">Consists of a catalytic RNA component (M1 or rnpB) and a protein subunit.</text>
</comment>
<comment type="similarity">
    <text evidence="1">Belongs to the RnpA family.</text>
</comment>
<dbReference type="EC" id="3.1.26.5" evidence="1"/>
<dbReference type="EMBL" id="CT978603">
    <property type="protein sequence ID" value="CAK27542.1"/>
    <property type="molecule type" value="Genomic_DNA"/>
</dbReference>
<dbReference type="SMR" id="A5GRN3"/>
<dbReference type="STRING" id="316278.SynRCC307_0639"/>
<dbReference type="KEGG" id="syr:SynRCC307_0639"/>
<dbReference type="eggNOG" id="COG0594">
    <property type="taxonomic scope" value="Bacteria"/>
</dbReference>
<dbReference type="HOGENOM" id="CLU_117179_2_0_3"/>
<dbReference type="OrthoDB" id="540358at2"/>
<dbReference type="Proteomes" id="UP000001115">
    <property type="component" value="Chromosome"/>
</dbReference>
<dbReference type="GO" id="GO:0030677">
    <property type="term" value="C:ribonuclease P complex"/>
    <property type="evidence" value="ECO:0007669"/>
    <property type="project" value="TreeGrafter"/>
</dbReference>
<dbReference type="GO" id="GO:0042781">
    <property type="term" value="F:3'-tRNA processing endoribonuclease activity"/>
    <property type="evidence" value="ECO:0007669"/>
    <property type="project" value="TreeGrafter"/>
</dbReference>
<dbReference type="GO" id="GO:0004526">
    <property type="term" value="F:ribonuclease P activity"/>
    <property type="evidence" value="ECO:0007669"/>
    <property type="project" value="UniProtKB-UniRule"/>
</dbReference>
<dbReference type="GO" id="GO:0000049">
    <property type="term" value="F:tRNA binding"/>
    <property type="evidence" value="ECO:0007669"/>
    <property type="project" value="UniProtKB-UniRule"/>
</dbReference>
<dbReference type="GO" id="GO:0001682">
    <property type="term" value="P:tRNA 5'-leader removal"/>
    <property type="evidence" value="ECO:0007669"/>
    <property type="project" value="UniProtKB-UniRule"/>
</dbReference>
<dbReference type="Gene3D" id="3.30.230.10">
    <property type="match status" value="1"/>
</dbReference>
<dbReference type="HAMAP" id="MF_00227">
    <property type="entry name" value="RNase_P"/>
    <property type="match status" value="1"/>
</dbReference>
<dbReference type="InterPro" id="IPR020568">
    <property type="entry name" value="Ribosomal_Su5_D2-typ_SF"/>
</dbReference>
<dbReference type="InterPro" id="IPR014721">
    <property type="entry name" value="Ribsml_uS5_D2-typ_fold_subgr"/>
</dbReference>
<dbReference type="InterPro" id="IPR000100">
    <property type="entry name" value="RNase_P"/>
</dbReference>
<dbReference type="NCBIfam" id="TIGR00188">
    <property type="entry name" value="rnpA"/>
    <property type="match status" value="1"/>
</dbReference>
<dbReference type="PANTHER" id="PTHR33992">
    <property type="entry name" value="RIBONUCLEASE P PROTEIN COMPONENT"/>
    <property type="match status" value="1"/>
</dbReference>
<dbReference type="PANTHER" id="PTHR33992:SF1">
    <property type="entry name" value="RIBONUCLEASE P PROTEIN COMPONENT"/>
    <property type="match status" value="1"/>
</dbReference>
<dbReference type="Pfam" id="PF00825">
    <property type="entry name" value="Ribonuclease_P"/>
    <property type="match status" value="1"/>
</dbReference>
<dbReference type="SUPFAM" id="SSF54211">
    <property type="entry name" value="Ribosomal protein S5 domain 2-like"/>
    <property type="match status" value="1"/>
</dbReference>